<accession>A1KMN3</accession>
<name>EFTS_MYCBP</name>
<sequence length="271" mass="28785">MANFTAADVKRLRELTGAGMLACKNALAETDGDFDKAVEALRIKGAKDVGKRAERATAEGLVAAKDGALIELNCETDFVAKNAEFQTLADQVVAAAAAAKPADVDALKGASIGDKTVEQAIAELSAKIGEKLELRRVAIFDGTVEAYLHRRSADLPPAVGVLVEYRGDDAAAAHAVALQIAALRARYLSRDDVPEDIVASERRIAEETARAEGKPEQALPKIVEGRLNGFFKDAVLLEQASVSDNKKTVKALLDVAGVMVTRFVRFEVGQA</sequence>
<reference key="1">
    <citation type="journal article" date="2007" name="Proc. Natl. Acad. Sci. U.S.A.">
        <title>Genome plasticity of BCG and impact on vaccine efficacy.</title>
        <authorList>
            <person name="Brosch R."/>
            <person name="Gordon S.V."/>
            <person name="Garnier T."/>
            <person name="Eiglmeier K."/>
            <person name="Frigui W."/>
            <person name="Valenti P."/>
            <person name="Dos Santos S."/>
            <person name="Duthoy S."/>
            <person name="Lacroix C."/>
            <person name="Garcia-Pelayo C."/>
            <person name="Inwald J.K."/>
            <person name="Golby P."/>
            <person name="Garcia J.N."/>
            <person name="Hewinson R.G."/>
            <person name="Behr M.A."/>
            <person name="Quail M.A."/>
            <person name="Churcher C."/>
            <person name="Barrell B.G."/>
            <person name="Parkhill J."/>
            <person name="Cole S.T."/>
        </authorList>
    </citation>
    <scope>NUCLEOTIDE SEQUENCE [LARGE SCALE GENOMIC DNA]</scope>
    <source>
        <strain>BCG / Pasteur 1173P2</strain>
    </source>
</reference>
<feature type="chain" id="PRO_1000006127" description="Elongation factor Ts">
    <location>
        <begin position="1"/>
        <end position="271"/>
    </location>
</feature>
<feature type="region of interest" description="Involved in Mg(2+) ion dislocation from EF-Tu" evidence="1">
    <location>
        <begin position="76"/>
        <end position="79"/>
    </location>
</feature>
<keyword id="KW-0963">Cytoplasm</keyword>
<keyword id="KW-0251">Elongation factor</keyword>
<keyword id="KW-0648">Protein biosynthesis</keyword>
<comment type="function">
    <text evidence="1">Associates with the EF-Tu.GDP complex and induces the exchange of GDP to GTP. It remains bound to the aminoacyl-tRNA.EF-Tu.GTP complex up to the GTP hydrolysis stage on the ribosome.</text>
</comment>
<comment type="subcellular location">
    <subcellularLocation>
        <location evidence="1">Cytoplasm</location>
    </subcellularLocation>
</comment>
<comment type="similarity">
    <text evidence="1">Belongs to the EF-Ts family.</text>
</comment>
<organism>
    <name type="scientific">Mycobacterium bovis (strain BCG / Pasteur 1173P2)</name>
    <dbReference type="NCBI Taxonomy" id="410289"/>
    <lineage>
        <taxon>Bacteria</taxon>
        <taxon>Bacillati</taxon>
        <taxon>Actinomycetota</taxon>
        <taxon>Actinomycetes</taxon>
        <taxon>Mycobacteriales</taxon>
        <taxon>Mycobacteriaceae</taxon>
        <taxon>Mycobacterium</taxon>
        <taxon>Mycobacterium tuberculosis complex</taxon>
    </lineage>
</organism>
<protein>
    <recommendedName>
        <fullName evidence="1">Elongation factor Ts</fullName>
        <shortName evidence="1">EF-Ts</shortName>
    </recommendedName>
</protein>
<dbReference type="EMBL" id="AM408590">
    <property type="protein sequence ID" value="CAL72899.1"/>
    <property type="molecule type" value="Genomic_DNA"/>
</dbReference>
<dbReference type="RefSeq" id="WP_010950794.1">
    <property type="nucleotide sequence ID" value="NC_008769.1"/>
</dbReference>
<dbReference type="SMR" id="A1KMN3"/>
<dbReference type="KEGG" id="mbb:BCG_2910c"/>
<dbReference type="HOGENOM" id="CLU_047155_0_0_11"/>
<dbReference type="Proteomes" id="UP000001472">
    <property type="component" value="Chromosome"/>
</dbReference>
<dbReference type="GO" id="GO:0005737">
    <property type="term" value="C:cytoplasm"/>
    <property type="evidence" value="ECO:0007669"/>
    <property type="project" value="UniProtKB-SubCell"/>
</dbReference>
<dbReference type="GO" id="GO:0003746">
    <property type="term" value="F:translation elongation factor activity"/>
    <property type="evidence" value="ECO:0007669"/>
    <property type="project" value="UniProtKB-UniRule"/>
</dbReference>
<dbReference type="CDD" id="cd14275">
    <property type="entry name" value="UBA_EF-Ts"/>
    <property type="match status" value="1"/>
</dbReference>
<dbReference type="FunFam" id="1.10.286.20:FF:000001">
    <property type="entry name" value="Elongation factor Ts"/>
    <property type="match status" value="1"/>
</dbReference>
<dbReference type="FunFam" id="1.10.8.10:FF:000001">
    <property type="entry name" value="Elongation factor Ts"/>
    <property type="match status" value="1"/>
</dbReference>
<dbReference type="FunFam" id="3.30.479.20:FF:000021">
    <property type="entry name" value="Elongation factor Ts"/>
    <property type="match status" value="1"/>
</dbReference>
<dbReference type="Gene3D" id="1.10.286.20">
    <property type="match status" value="1"/>
</dbReference>
<dbReference type="Gene3D" id="1.10.8.10">
    <property type="entry name" value="DNA helicase RuvA subunit, C-terminal domain"/>
    <property type="match status" value="1"/>
</dbReference>
<dbReference type="Gene3D" id="3.30.479.20">
    <property type="entry name" value="Elongation factor Ts, dimerisation domain"/>
    <property type="match status" value="2"/>
</dbReference>
<dbReference type="HAMAP" id="MF_00050">
    <property type="entry name" value="EF_Ts"/>
    <property type="match status" value="1"/>
</dbReference>
<dbReference type="InterPro" id="IPR036402">
    <property type="entry name" value="EF-Ts_dimer_sf"/>
</dbReference>
<dbReference type="InterPro" id="IPR001816">
    <property type="entry name" value="Transl_elong_EFTs/EF1B"/>
</dbReference>
<dbReference type="InterPro" id="IPR014039">
    <property type="entry name" value="Transl_elong_EFTs/EF1B_dimer"/>
</dbReference>
<dbReference type="InterPro" id="IPR018101">
    <property type="entry name" value="Transl_elong_Ts_CS"/>
</dbReference>
<dbReference type="InterPro" id="IPR009060">
    <property type="entry name" value="UBA-like_sf"/>
</dbReference>
<dbReference type="NCBIfam" id="TIGR00116">
    <property type="entry name" value="tsf"/>
    <property type="match status" value="1"/>
</dbReference>
<dbReference type="PANTHER" id="PTHR11741">
    <property type="entry name" value="ELONGATION FACTOR TS"/>
    <property type="match status" value="1"/>
</dbReference>
<dbReference type="PANTHER" id="PTHR11741:SF0">
    <property type="entry name" value="ELONGATION FACTOR TS, MITOCHONDRIAL"/>
    <property type="match status" value="1"/>
</dbReference>
<dbReference type="Pfam" id="PF00889">
    <property type="entry name" value="EF_TS"/>
    <property type="match status" value="1"/>
</dbReference>
<dbReference type="SUPFAM" id="SSF54713">
    <property type="entry name" value="Elongation factor Ts (EF-Ts), dimerisation domain"/>
    <property type="match status" value="2"/>
</dbReference>
<dbReference type="SUPFAM" id="SSF46934">
    <property type="entry name" value="UBA-like"/>
    <property type="match status" value="1"/>
</dbReference>
<dbReference type="PROSITE" id="PS01126">
    <property type="entry name" value="EF_TS_1"/>
    <property type="match status" value="1"/>
</dbReference>
<dbReference type="PROSITE" id="PS01127">
    <property type="entry name" value="EF_TS_2"/>
    <property type="match status" value="1"/>
</dbReference>
<evidence type="ECO:0000255" key="1">
    <source>
        <dbReference type="HAMAP-Rule" id="MF_00050"/>
    </source>
</evidence>
<gene>
    <name evidence="1" type="primary">tsf</name>
    <name type="ordered locus">BCG_2910c</name>
</gene>
<proteinExistence type="inferred from homology"/>